<evidence type="ECO:0000250" key="1"/>
<evidence type="ECO:0000250" key="2">
    <source>
        <dbReference type="UniProtKB" id="Q9FKW4"/>
    </source>
</evidence>
<evidence type="ECO:0000255" key="3">
    <source>
        <dbReference type="PROSITE-ProRule" id="PRU00159"/>
    </source>
</evidence>
<evidence type="ECO:0000255" key="4">
    <source>
        <dbReference type="PROSITE-ProRule" id="PRU00448"/>
    </source>
</evidence>
<evidence type="ECO:0000255" key="5">
    <source>
        <dbReference type="PROSITE-ProRule" id="PRU10027"/>
    </source>
</evidence>
<evidence type="ECO:0000269" key="6">
    <source>
    </source>
</evidence>
<evidence type="ECO:0000269" key="7">
    <source>
    </source>
</evidence>
<evidence type="ECO:0000269" key="8">
    <source>
    </source>
</evidence>
<evidence type="ECO:0000305" key="9"/>
<comment type="function">
    <text evidence="7 8">May play a role in signal transduction pathways that involve calcium as a second messenger. Functions as a regulator of the calcium-mediated abscisic acid (ABA) signaling pathway. Phosphorylates ABA-responsive transcription factors ABF1 and ABF4 in vitro.</text>
</comment>
<comment type="catalytic activity">
    <reaction>
        <text>L-seryl-[protein] + ATP = O-phospho-L-seryl-[protein] + ADP + H(+)</text>
        <dbReference type="Rhea" id="RHEA:17989"/>
        <dbReference type="Rhea" id="RHEA-COMP:9863"/>
        <dbReference type="Rhea" id="RHEA-COMP:11604"/>
        <dbReference type="ChEBI" id="CHEBI:15378"/>
        <dbReference type="ChEBI" id="CHEBI:29999"/>
        <dbReference type="ChEBI" id="CHEBI:30616"/>
        <dbReference type="ChEBI" id="CHEBI:83421"/>
        <dbReference type="ChEBI" id="CHEBI:456216"/>
        <dbReference type="EC" id="2.7.11.1"/>
    </reaction>
</comment>
<comment type="catalytic activity">
    <reaction>
        <text>L-threonyl-[protein] + ATP = O-phospho-L-threonyl-[protein] + ADP + H(+)</text>
        <dbReference type="Rhea" id="RHEA:46608"/>
        <dbReference type="Rhea" id="RHEA-COMP:11060"/>
        <dbReference type="Rhea" id="RHEA-COMP:11605"/>
        <dbReference type="ChEBI" id="CHEBI:15378"/>
        <dbReference type="ChEBI" id="CHEBI:30013"/>
        <dbReference type="ChEBI" id="CHEBI:30616"/>
        <dbReference type="ChEBI" id="CHEBI:61977"/>
        <dbReference type="ChEBI" id="CHEBI:456216"/>
        <dbReference type="EC" id="2.7.11.1"/>
    </reaction>
</comment>
<comment type="activity regulation">
    <text evidence="1">Activated by calcium. Autophosphorylation may play an important role in the regulation of the kinase activity (By similarity).</text>
</comment>
<comment type="subunit">
    <text evidence="6">Interacts with Di19.</text>
</comment>
<comment type="interaction">
    <interactant intactId="EBI-979321">
        <id>Q39016</id>
    </interactant>
    <interactant intactId="EBI-2009725">
        <id>Q9ZSK4</id>
        <label>ADF3</label>
    </interactant>
    <organismsDiffer>false</organismsDiffer>
    <experiments>5</experiments>
</comment>
<comment type="interaction">
    <interactant intactId="EBI-979321">
        <id>Q39016</id>
    </interactant>
    <interactant intactId="EBI-1537419">
        <id>Q9C944</id>
        <label>At1g52740</label>
    </interactant>
    <organismsDiffer>false</organismsDiffer>
    <experiments>9</experiments>
</comment>
<comment type="interaction">
    <interactant intactId="EBI-979321">
        <id>Q39016</id>
    </interactant>
    <interactant intactId="EBI-2297208">
        <id>Q27GK5</id>
        <label>At3g26510</label>
    </interactant>
    <organismsDiffer>false</organismsDiffer>
    <experiments>5</experiments>
</comment>
<comment type="interaction">
    <interactant intactId="EBI-979321">
        <id>Q39016</id>
    </interactant>
    <interactant intactId="EBI-2298422">
        <id>Q940C2</id>
        <label>At5g52550</label>
    </interactant>
    <organismsDiffer>false</organismsDiffer>
    <experiments>6</experiments>
</comment>
<comment type="interaction">
    <interactant intactId="EBI-979321">
        <id>Q39016</id>
    </interactant>
    <interactant intactId="EBI-540986">
        <id>Q94BN0</id>
        <label>BT2</label>
    </interactant>
    <organismsDiffer>false</organismsDiffer>
    <experiments>7</experiments>
</comment>
<comment type="interaction">
    <interactant intactId="EBI-979321">
        <id>Q39016</id>
    </interactant>
    <interactant intactId="EBI-2298544">
        <id>Q9CA67</id>
        <label>CHLP</label>
    </interactant>
    <organismsDiffer>false</organismsDiffer>
    <experiments>5</experiments>
</comment>
<comment type="interaction">
    <interactant intactId="EBI-979321">
        <id>Q39016</id>
    </interactant>
    <interactant intactId="EBI-979339">
        <id>Q39083</id>
        <label>DI19-1</label>
    </interactant>
    <organismsDiffer>false</organismsDiffer>
    <experiments>25</experiments>
</comment>
<comment type="interaction">
    <interactant intactId="EBI-979321">
        <id>Q39016</id>
    </interactant>
    <interactant intactId="EBI-2296482">
        <id>O23338</id>
        <label>HSP1</label>
    </interactant>
    <organismsDiffer>false</organismsDiffer>
    <experiments>6</experiments>
</comment>
<comment type="interaction">
    <interactant intactId="EBI-979321">
        <id>Q39016</id>
    </interactant>
    <interactant intactId="EBI-2298689">
        <id>O80800</id>
        <label>MTACP2</label>
    </interactant>
    <organismsDiffer>false</organismsDiffer>
    <experiments>4</experiments>
</comment>
<comment type="interaction">
    <interactant intactId="EBI-979321">
        <id>Q39016</id>
    </interactant>
    <interactant intactId="EBI-639377">
        <id>O23680</id>
        <label>TOC33</label>
    </interactant>
    <organismsDiffer>false</organismsDiffer>
    <experiments>4</experiments>
</comment>
<comment type="interaction">
    <interactant intactId="EBI-979321">
        <id>Q39016</id>
    </interactant>
    <interactant intactId="EBI-2298606">
        <id>O04482</id>
        <label>UCH2</label>
    </interactant>
    <organismsDiffer>false</organismsDiffer>
    <experiments>4</experiments>
</comment>
<comment type="subcellular location">
    <subcellularLocation>
        <location evidence="6">Cytoplasm</location>
    </subcellularLocation>
    <subcellularLocation>
        <location evidence="6">Nucleus</location>
    </subcellularLocation>
</comment>
<comment type="induction">
    <text evidence="8">By drought and high-slat stress, but not by low-temperature, heat stress or abscisic acid treatment.</text>
</comment>
<comment type="domain">
    <text evidence="1">There are 3 contiguous domains conserved in the CDPK subfamily: a kinase domain, an autoinhibitory (junction) domain and a calmodulin-like domain. The autoinhibitory domain (290-320) inactivates kinase activity under calcium-free conditions (By similarity).</text>
</comment>
<comment type="disruption phenotype">
    <text evidence="7">Mutant cpk11-2 shows reduced ABA and salt responsiveness in seed germination.</text>
</comment>
<comment type="similarity">
    <text evidence="3">Belongs to the protein kinase superfamily. Ser/Thr protein kinase family. CDPK subfamily.</text>
</comment>
<comment type="sequence caution" evidence="9">
    <conflict type="erroneous gene model prediction">
        <sequence resource="EMBL-CDS" id="AAF79386"/>
    </conflict>
</comment>
<gene>
    <name type="primary">CPK11</name>
    <name type="synonym">CDPK2</name>
    <name type="ordered locus">At1g35670</name>
    <name type="ORF">F15O4.8</name>
</gene>
<dbReference type="EC" id="2.7.11.1"/>
<dbReference type="EMBL" id="D21806">
    <property type="protein sequence ID" value="BAA04830.1"/>
    <property type="molecule type" value="mRNA"/>
</dbReference>
<dbReference type="EMBL" id="AC007887">
    <property type="protein sequence ID" value="AAF79386.1"/>
    <property type="status" value="ALT_SEQ"/>
    <property type="molecule type" value="Genomic_DNA"/>
</dbReference>
<dbReference type="EMBL" id="CP002684">
    <property type="protein sequence ID" value="AEE31822.1"/>
    <property type="molecule type" value="Genomic_DNA"/>
</dbReference>
<dbReference type="EMBL" id="AY050981">
    <property type="protein sequence ID" value="AAK93658.1"/>
    <property type="molecule type" value="mRNA"/>
</dbReference>
<dbReference type="EMBL" id="AY113986">
    <property type="protein sequence ID" value="AAM45034.1"/>
    <property type="molecule type" value="mRNA"/>
</dbReference>
<dbReference type="PIR" id="S46284">
    <property type="entry name" value="S46284"/>
</dbReference>
<dbReference type="RefSeq" id="NP_174807.1">
    <property type="nucleotide sequence ID" value="NM_103271.4"/>
</dbReference>
<dbReference type="SMR" id="Q39016"/>
<dbReference type="BioGRID" id="25703">
    <property type="interactions" value="35"/>
</dbReference>
<dbReference type="FunCoup" id="Q39016">
    <property type="interactions" value="1120"/>
</dbReference>
<dbReference type="IntAct" id="Q39016">
    <property type="interactions" value="25"/>
</dbReference>
<dbReference type="MINT" id="Q39016"/>
<dbReference type="STRING" id="3702.Q39016"/>
<dbReference type="iPTMnet" id="Q39016"/>
<dbReference type="PaxDb" id="3702-AT1G35670.1"/>
<dbReference type="ProteomicsDB" id="224453"/>
<dbReference type="EnsemblPlants" id="AT1G35670.1">
    <property type="protein sequence ID" value="AT1G35670.1"/>
    <property type="gene ID" value="AT1G35670"/>
</dbReference>
<dbReference type="GeneID" id="840471"/>
<dbReference type="Gramene" id="AT1G35670.1">
    <property type="protein sequence ID" value="AT1G35670.1"/>
    <property type="gene ID" value="AT1G35670"/>
</dbReference>
<dbReference type="KEGG" id="ath:AT1G35670"/>
<dbReference type="Araport" id="AT1G35670"/>
<dbReference type="TAIR" id="AT1G35670">
    <property type="gene designation" value="CDPK2"/>
</dbReference>
<dbReference type="eggNOG" id="KOG0032">
    <property type="taxonomic scope" value="Eukaryota"/>
</dbReference>
<dbReference type="HOGENOM" id="CLU_000288_37_4_1"/>
<dbReference type="InParanoid" id="Q39016"/>
<dbReference type="OMA" id="DPGKKTD"/>
<dbReference type="PRO" id="PR:Q39016"/>
<dbReference type="Proteomes" id="UP000006548">
    <property type="component" value="Chromosome 1"/>
</dbReference>
<dbReference type="ExpressionAtlas" id="Q39016">
    <property type="expression patterns" value="baseline and differential"/>
</dbReference>
<dbReference type="GO" id="GO:0005829">
    <property type="term" value="C:cytosol"/>
    <property type="evidence" value="ECO:0000314"/>
    <property type="project" value="TAIR"/>
</dbReference>
<dbReference type="GO" id="GO:0005634">
    <property type="term" value="C:nucleus"/>
    <property type="evidence" value="ECO:0000314"/>
    <property type="project" value="TAIR"/>
</dbReference>
<dbReference type="GO" id="GO:0005524">
    <property type="term" value="F:ATP binding"/>
    <property type="evidence" value="ECO:0007669"/>
    <property type="project" value="UniProtKB-KW"/>
</dbReference>
<dbReference type="GO" id="GO:0005509">
    <property type="term" value="F:calcium ion binding"/>
    <property type="evidence" value="ECO:0007669"/>
    <property type="project" value="InterPro"/>
</dbReference>
<dbReference type="GO" id="GO:0004683">
    <property type="term" value="F:calcium/calmodulin-dependent protein kinase activity"/>
    <property type="evidence" value="ECO:0000314"/>
    <property type="project" value="TAIR"/>
</dbReference>
<dbReference type="GO" id="GO:0004672">
    <property type="term" value="F:protein kinase activity"/>
    <property type="evidence" value="ECO:0000314"/>
    <property type="project" value="TAIR"/>
</dbReference>
<dbReference type="GO" id="GO:0106310">
    <property type="term" value="F:protein serine kinase activity"/>
    <property type="evidence" value="ECO:0007669"/>
    <property type="project" value="RHEA"/>
</dbReference>
<dbReference type="GO" id="GO:0004674">
    <property type="term" value="F:protein serine/threonine kinase activity"/>
    <property type="evidence" value="ECO:0007005"/>
    <property type="project" value="TAIR"/>
</dbReference>
<dbReference type="GO" id="GO:0009789">
    <property type="term" value="P:positive regulation of abscisic acid-activated signaling pathway"/>
    <property type="evidence" value="ECO:0000315"/>
    <property type="project" value="TAIR"/>
</dbReference>
<dbReference type="GO" id="GO:0046777">
    <property type="term" value="P:protein autophosphorylation"/>
    <property type="evidence" value="ECO:0007005"/>
    <property type="project" value="TAIR"/>
</dbReference>
<dbReference type="GO" id="GO:0006468">
    <property type="term" value="P:protein phosphorylation"/>
    <property type="evidence" value="ECO:0000314"/>
    <property type="project" value="TAIR"/>
</dbReference>
<dbReference type="GO" id="GO:1901979">
    <property type="term" value="P:regulation of inward rectifier potassium channel activity"/>
    <property type="evidence" value="ECO:0000314"/>
    <property type="project" value="TAIR"/>
</dbReference>
<dbReference type="GO" id="GO:0080092">
    <property type="term" value="P:regulation of pollen tube growth"/>
    <property type="evidence" value="ECO:0000315"/>
    <property type="project" value="TAIR"/>
</dbReference>
<dbReference type="CDD" id="cd00051">
    <property type="entry name" value="EFh"/>
    <property type="match status" value="1"/>
</dbReference>
<dbReference type="CDD" id="cd05117">
    <property type="entry name" value="STKc_CAMK"/>
    <property type="match status" value="1"/>
</dbReference>
<dbReference type="FunFam" id="1.10.238.10:FF:000015">
    <property type="entry name" value="Calcium-dependent protein kinase 1"/>
    <property type="match status" value="1"/>
</dbReference>
<dbReference type="FunFam" id="3.30.200.20:FF:000004">
    <property type="entry name" value="Calcium-dependent protein kinase 1"/>
    <property type="match status" value="1"/>
</dbReference>
<dbReference type="FunFam" id="1.10.510.10:FF:000249">
    <property type="entry name" value="Calcium-dependent protein kinase SK5"/>
    <property type="match status" value="1"/>
</dbReference>
<dbReference type="Gene3D" id="1.10.238.10">
    <property type="entry name" value="EF-hand"/>
    <property type="match status" value="1"/>
</dbReference>
<dbReference type="Gene3D" id="3.30.200.20">
    <property type="entry name" value="Phosphorylase Kinase, domain 1"/>
    <property type="match status" value="1"/>
</dbReference>
<dbReference type="Gene3D" id="1.10.510.10">
    <property type="entry name" value="Transferase(Phosphotransferase) domain 1"/>
    <property type="match status" value="1"/>
</dbReference>
<dbReference type="InterPro" id="IPR050205">
    <property type="entry name" value="CDPK_Ser/Thr_kinases"/>
</dbReference>
<dbReference type="InterPro" id="IPR011992">
    <property type="entry name" value="EF-hand-dom_pair"/>
</dbReference>
<dbReference type="InterPro" id="IPR018247">
    <property type="entry name" value="EF_Hand_1_Ca_BS"/>
</dbReference>
<dbReference type="InterPro" id="IPR002048">
    <property type="entry name" value="EF_hand_dom"/>
</dbReference>
<dbReference type="InterPro" id="IPR011009">
    <property type="entry name" value="Kinase-like_dom_sf"/>
</dbReference>
<dbReference type="InterPro" id="IPR000719">
    <property type="entry name" value="Prot_kinase_dom"/>
</dbReference>
<dbReference type="InterPro" id="IPR017441">
    <property type="entry name" value="Protein_kinase_ATP_BS"/>
</dbReference>
<dbReference type="InterPro" id="IPR008271">
    <property type="entry name" value="Ser/Thr_kinase_AS"/>
</dbReference>
<dbReference type="PANTHER" id="PTHR24349">
    <property type="entry name" value="SERINE/THREONINE-PROTEIN KINASE"/>
    <property type="match status" value="1"/>
</dbReference>
<dbReference type="Pfam" id="PF13499">
    <property type="entry name" value="EF-hand_7"/>
    <property type="match status" value="2"/>
</dbReference>
<dbReference type="Pfam" id="PF00069">
    <property type="entry name" value="Pkinase"/>
    <property type="match status" value="1"/>
</dbReference>
<dbReference type="SMART" id="SM00054">
    <property type="entry name" value="EFh"/>
    <property type="match status" value="4"/>
</dbReference>
<dbReference type="SMART" id="SM00220">
    <property type="entry name" value="S_TKc"/>
    <property type="match status" value="1"/>
</dbReference>
<dbReference type="SUPFAM" id="SSF47473">
    <property type="entry name" value="EF-hand"/>
    <property type="match status" value="1"/>
</dbReference>
<dbReference type="SUPFAM" id="SSF56112">
    <property type="entry name" value="Protein kinase-like (PK-like)"/>
    <property type="match status" value="1"/>
</dbReference>
<dbReference type="PROSITE" id="PS00018">
    <property type="entry name" value="EF_HAND_1"/>
    <property type="match status" value="4"/>
</dbReference>
<dbReference type="PROSITE" id="PS50222">
    <property type="entry name" value="EF_HAND_2"/>
    <property type="match status" value="4"/>
</dbReference>
<dbReference type="PROSITE" id="PS00107">
    <property type="entry name" value="PROTEIN_KINASE_ATP"/>
    <property type="match status" value="1"/>
</dbReference>
<dbReference type="PROSITE" id="PS50011">
    <property type="entry name" value="PROTEIN_KINASE_DOM"/>
    <property type="match status" value="1"/>
</dbReference>
<dbReference type="PROSITE" id="PS00108">
    <property type="entry name" value="PROTEIN_KINASE_ST"/>
    <property type="match status" value="1"/>
</dbReference>
<keyword id="KW-0067">ATP-binding</keyword>
<keyword id="KW-0106">Calcium</keyword>
<keyword id="KW-0963">Cytoplasm</keyword>
<keyword id="KW-0418">Kinase</keyword>
<keyword id="KW-0479">Metal-binding</keyword>
<keyword id="KW-0547">Nucleotide-binding</keyword>
<keyword id="KW-0539">Nucleus</keyword>
<keyword id="KW-0597">Phosphoprotein</keyword>
<keyword id="KW-1185">Reference proteome</keyword>
<keyword id="KW-0677">Repeat</keyword>
<keyword id="KW-0723">Serine/threonine-protein kinase</keyword>
<keyword id="KW-0808">Transferase</keyword>
<protein>
    <recommendedName>
        <fullName>Calcium-dependent protein kinase 11</fullName>
        <ecNumber>2.7.11.1</ecNumber>
    </recommendedName>
    <alternativeName>
        <fullName>Calcium-dependent protein kinase isoform CDPK2</fullName>
        <shortName>AtCDPK2</shortName>
    </alternativeName>
</protein>
<organism>
    <name type="scientific">Arabidopsis thaliana</name>
    <name type="common">Mouse-ear cress</name>
    <dbReference type="NCBI Taxonomy" id="3702"/>
    <lineage>
        <taxon>Eukaryota</taxon>
        <taxon>Viridiplantae</taxon>
        <taxon>Streptophyta</taxon>
        <taxon>Embryophyta</taxon>
        <taxon>Tracheophyta</taxon>
        <taxon>Spermatophyta</taxon>
        <taxon>Magnoliopsida</taxon>
        <taxon>eudicotyledons</taxon>
        <taxon>Gunneridae</taxon>
        <taxon>Pentapetalae</taxon>
        <taxon>rosids</taxon>
        <taxon>malvids</taxon>
        <taxon>Brassicales</taxon>
        <taxon>Brassicaceae</taxon>
        <taxon>Camelineae</taxon>
        <taxon>Arabidopsis</taxon>
    </lineage>
</organism>
<accession>Q39016</accession>
<accession>Q949P0</accession>
<accession>Q9LQH7</accession>
<reference key="1">
    <citation type="journal article" date="1994" name="Mol. Gen. Genet.">
        <title>Two genes that encode Ca(2+)-dependent protein kinases are induced by drought and high-salt stresses in Arabidopsis thaliana.</title>
        <authorList>
            <person name="Urao T."/>
            <person name="Katagiri T."/>
            <person name="Mizoguchi T."/>
            <person name="Yamaguchi-Shinozaki K."/>
            <person name="Hayashida N."/>
            <person name="Shinozaki K."/>
        </authorList>
    </citation>
    <scope>NUCLEOTIDE SEQUENCE [MRNA]</scope>
    <scope>FUNCTION</scope>
    <scope>INDUCTION</scope>
</reference>
<reference key="2">
    <citation type="journal article" date="2000" name="Nature">
        <title>Sequence and analysis of chromosome 1 of the plant Arabidopsis thaliana.</title>
        <authorList>
            <person name="Theologis A."/>
            <person name="Ecker J.R."/>
            <person name="Palm C.J."/>
            <person name="Federspiel N.A."/>
            <person name="Kaul S."/>
            <person name="White O."/>
            <person name="Alonso J."/>
            <person name="Altafi H."/>
            <person name="Araujo R."/>
            <person name="Bowman C.L."/>
            <person name="Brooks S.Y."/>
            <person name="Buehler E."/>
            <person name="Chan A."/>
            <person name="Chao Q."/>
            <person name="Chen H."/>
            <person name="Cheuk R.F."/>
            <person name="Chin C.W."/>
            <person name="Chung M.K."/>
            <person name="Conn L."/>
            <person name="Conway A.B."/>
            <person name="Conway A.R."/>
            <person name="Creasy T.H."/>
            <person name="Dewar K."/>
            <person name="Dunn P."/>
            <person name="Etgu P."/>
            <person name="Feldblyum T.V."/>
            <person name="Feng J.-D."/>
            <person name="Fong B."/>
            <person name="Fujii C.Y."/>
            <person name="Gill J.E."/>
            <person name="Goldsmith A.D."/>
            <person name="Haas B."/>
            <person name="Hansen N.F."/>
            <person name="Hughes B."/>
            <person name="Huizar L."/>
            <person name="Hunter J.L."/>
            <person name="Jenkins J."/>
            <person name="Johnson-Hopson C."/>
            <person name="Khan S."/>
            <person name="Khaykin E."/>
            <person name="Kim C.J."/>
            <person name="Koo H.L."/>
            <person name="Kremenetskaia I."/>
            <person name="Kurtz D.B."/>
            <person name="Kwan A."/>
            <person name="Lam B."/>
            <person name="Langin-Hooper S."/>
            <person name="Lee A."/>
            <person name="Lee J.M."/>
            <person name="Lenz C.A."/>
            <person name="Li J.H."/>
            <person name="Li Y.-P."/>
            <person name="Lin X."/>
            <person name="Liu S.X."/>
            <person name="Liu Z.A."/>
            <person name="Luros J.S."/>
            <person name="Maiti R."/>
            <person name="Marziali A."/>
            <person name="Militscher J."/>
            <person name="Miranda M."/>
            <person name="Nguyen M."/>
            <person name="Nierman W.C."/>
            <person name="Osborne B.I."/>
            <person name="Pai G."/>
            <person name="Peterson J."/>
            <person name="Pham P.K."/>
            <person name="Rizzo M."/>
            <person name="Rooney T."/>
            <person name="Rowley D."/>
            <person name="Sakano H."/>
            <person name="Salzberg S.L."/>
            <person name="Schwartz J.R."/>
            <person name="Shinn P."/>
            <person name="Southwick A.M."/>
            <person name="Sun H."/>
            <person name="Tallon L.J."/>
            <person name="Tambunga G."/>
            <person name="Toriumi M.J."/>
            <person name="Town C.D."/>
            <person name="Utterback T."/>
            <person name="Van Aken S."/>
            <person name="Vaysberg M."/>
            <person name="Vysotskaia V.S."/>
            <person name="Walker M."/>
            <person name="Wu D."/>
            <person name="Yu G."/>
            <person name="Fraser C.M."/>
            <person name="Venter J.C."/>
            <person name="Davis R.W."/>
        </authorList>
    </citation>
    <scope>NUCLEOTIDE SEQUENCE [LARGE SCALE GENOMIC DNA]</scope>
    <source>
        <strain>cv. Columbia</strain>
    </source>
</reference>
<reference key="3">
    <citation type="journal article" date="2017" name="Plant J.">
        <title>Araport11: a complete reannotation of the Arabidopsis thaliana reference genome.</title>
        <authorList>
            <person name="Cheng C.Y."/>
            <person name="Krishnakumar V."/>
            <person name="Chan A.P."/>
            <person name="Thibaud-Nissen F."/>
            <person name="Schobel S."/>
            <person name="Town C.D."/>
        </authorList>
    </citation>
    <scope>GENOME REANNOTATION</scope>
    <source>
        <strain>cv. Columbia</strain>
    </source>
</reference>
<reference key="4">
    <citation type="journal article" date="2003" name="Science">
        <title>Empirical analysis of transcriptional activity in the Arabidopsis genome.</title>
        <authorList>
            <person name="Yamada K."/>
            <person name="Lim J."/>
            <person name="Dale J.M."/>
            <person name="Chen H."/>
            <person name="Shinn P."/>
            <person name="Palm C.J."/>
            <person name="Southwick A.M."/>
            <person name="Wu H.C."/>
            <person name="Kim C.J."/>
            <person name="Nguyen M."/>
            <person name="Pham P.K."/>
            <person name="Cheuk R.F."/>
            <person name="Karlin-Newmann G."/>
            <person name="Liu S.X."/>
            <person name="Lam B."/>
            <person name="Sakano H."/>
            <person name="Wu T."/>
            <person name="Yu G."/>
            <person name="Miranda M."/>
            <person name="Quach H.L."/>
            <person name="Tripp M."/>
            <person name="Chang C.H."/>
            <person name="Lee J.M."/>
            <person name="Toriumi M.J."/>
            <person name="Chan M.M."/>
            <person name="Tang C.C."/>
            <person name="Onodera C.S."/>
            <person name="Deng J.M."/>
            <person name="Akiyama K."/>
            <person name="Ansari Y."/>
            <person name="Arakawa T."/>
            <person name="Banh J."/>
            <person name="Banno F."/>
            <person name="Bowser L."/>
            <person name="Brooks S.Y."/>
            <person name="Carninci P."/>
            <person name="Chao Q."/>
            <person name="Choy N."/>
            <person name="Enju A."/>
            <person name="Goldsmith A.D."/>
            <person name="Gurjal M."/>
            <person name="Hansen N.F."/>
            <person name="Hayashizaki Y."/>
            <person name="Johnson-Hopson C."/>
            <person name="Hsuan V.W."/>
            <person name="Iida K."/>
            <person name="Karnes M."/>
            <person name="Khan S."/>
            <person name="Koesema E."/>
            <person name="Ishida J."/>
            <person name="Jiang P.X."/>
            <person name="Jones T."/>
            <person name="Kawai J."/>
            <person name="Kamiya A."/>
            <person name="Meyers C."/>
            <person name="Nakajima M."/>
            <person name="Narusaka M."/>
            <person name="Seki M."/>
            <person name="Sakurai T."/>
            <person name="Satou M."/>
            <person name="Tamse R."/>
            <person name="Vaysberg M."/>
            <person name="Wallender E.K."/>
            <person name="Wong C."/>
            <person name="Yamamura Y."/>
            <person name="Yuan S."/>
            <person name="Shinozaki K."/>
            <person name="Davis R.W."/>
            <person name="Theologis A."/>
            <person name="Ecker J.R."/>
        </authorList>
    </citation>
    <scope>NUCLEOTIDE SEQUENCE [LARGE SCALE MRNA]</scope>
    <source>
        <strain>cv. Columbia</strain>
    </source>
</reference>
<reference key="5">
    <citation type="journal article" date="2001" name="New Phytol.">
        <title>The CDPK superfamily of protein kinases.</title>
        <authorList>
            <person name="Harmon A.C."/>
            <person name="Gribskov M."/>
            <person name="Gubrium E."/>
            <person name="Harper J.F."/>
        </authorList>
    </citation>
    <scope>GENE FAMILY</scope>
    <scope>NOMENCLATURE</scope>
</reference>
<reference key="6">
    <citation type="journal article" date="2002" name="Plant Physiol.">
        <title>Calcium signaling through protein kinases. The Arabidopsis calcium-dependent protein kinase gene family.</title>
        <authorList>
            <person name="Cheng S.-H."/>
            <person name="Willmann M.R."/>
            <person name="Chen H.-C."/>
            <person name="Sheen J."/>
        </authorList>
    </citation>
    <scope>GENE FAMILY</scope>
    <scope>NOMENCLATURE</scope>
</reference>
<reference key="7">
    <citation type="journal article" date="2003" name="Plant Physiol.">
        <title>The Arabidopsis CDPK-SnRK superfamily of protein kinases.</title>
        <authorList>
            <person name="Hrabak E.M."/>
            <person name="Chan C.W.M."/>
            <person name="Gribskov M."/>
            <person name="Harper J.F."/>
            <person name="Choi J.H."/>
            <person name="Halford N."/>
            <person name="Kudla J."/>
            <person name="Luan S."/>
            <person name="Nimmo H.G."/>
            <person name="Sussman M.R."/>
            <person name="Thomas M."/>
            <person name="Walker-Simmons K."/>
            <person name="Zhu J.-K."/>
            <person name="Harmon A.C."/>
        </authorList>
    </citation>
    <scope>GENE FAMILY</scope>
    <scope>NOMENCLATURE</scope>
</reference>
<reference key="8">
    <citation type="journal article" date="2006" name="FEBS Lett.">
        <title>A novel yeast two-hybrid approach to identify CDPK substrates: characterization of the interaction between AtCPK11 and AtDi19, a nuclear zinc finger protein.</title>
        <authorList>
            <person name="Rodriguez Milla M.A."/>
            <person name="Uno Y."/>
            <person name="Chang I.-F."/>
            <person name="Townsend J."/>
            <person name="Maher E.A."/>
            <person name="Quilici D."/>
            <person name="Cushman J.C."/>
        </authorList>
    </citation>
    <scope>INTERACTION WITH DI19</scope>
    <scope>SUBCELLULAR LOCATION</scope>
    <scope>MUTAGENESIS OF ASP-150; ASP-171 AND PHE-306</scope>
</reference>
<reference key="9">
    <citation type="journal article" date="2007" name="Plant Cell">
        <title>Two calcium-dependent protein kinases, CPK4 and CPK11, regulate abscisic acid signal transduction in Arabidopsis.</title>
        <authorList>
            <person name="Zhu S.-Y."/>
            <person name="Yu X.-C."/>
            <person name="Wang X.-J."/>
            <person name="Zhao R."/>
            <person name="Li Y."/>
            <person name="Fan R.-C."/>
            <person name="Shang Y."/>
            <person name="Du S.-Y."/>
            <person name="Wang X.-F."/>
            <person name="Wu F.-Q."/>
            <person name="Xu Y.-H."/>
            <person name="Zhang X.-Y."/>
            <person name="Zhang D.-P."/>
        </authorList>
    </citation>
    <scope>FUNCTION</scope>
    <scope>DISRUPTION PHENOTYPE</scope>
</reference>
<sequence>METKPNPRRPSNTVLPYQTPRLRDHYLLGKKLGQGQFGTTYLCTEKSTSANYACKSIPKRKLVCREDYEDVWREIQIMHHLSEHPNVVRIKGTYEDSVFVHIVMEVCEGGELFDRIVSKGHFSEREAVKLIKTILGVVEACHSLGVMHRDLKPENFLFDSPKDDAKLKATDFGLSVFYKPGQYLYDVVGSPYYVAPEVLKKCYGPEIDVWSAGVILYILLSGVPPFWAETESGIFRQILQGKLDFKSDPWPTISEAAKDLIYKMLERSPKKRISAHEALCHPWIVDEQAAPDKPLDPAVLSRLKQFSQMNKIKKMALRVIAERLSEEEIGGLKELFKMIDTDNSGTITFEELKAGLKRVGSELMESEIKSLMDAADIDNSGTIDYGEFLAATLHMNKMEREENLVAAFSYFDKDGSGYITIDELQSACTEFGLCDTPLDDMIKEIDLDNDGKIDFSEFTAMMRKGDGVGRSRTMMKNLNFNIADAFGVDGEKSDD</sequence>
<feature type="chain" id="PRO_0000304513" description="Calcium-dependent protein kinase 11">
    <location>
        <begin position="1"/>
        <end position="495"/>
    </location>
</feature>
<feature type="domain" description="Protein kinase" evidence="3">
    <location>
        <begin position="26"/>
        <end position="284"/>
    </location>
</feature>
<feature type="domain" description="EF-hand 1" evidence="4">
    <location>
        <begin position="327"/>
        <end position="362"/>
    </location>
</feature>
<feature type="domain" description="EF-hand 2" evidence="4">
    <location>
        <begin position="363"/>
        <end position="398"/>
    </location>
</feature>
<feature type="domain" description="EF-hand 3" evidence="4">
    <location>
        <begin position="399"/>
        <end position="434"/>
    </location>
</feature>
<feature type="domain" description="EF-hand 4" evidence="4">
    <location>
        <begin position="438"/>
        <end position="468"/>
    </location>
</feature>
<feature type="region of interest" description="Autoinhibitory domain" evidence="1">
    <location>
        <begin position="290"/>
        <end position="320"/>
    </location>
</feature>
<feature type="active site" description="Proton acceptor" evidence="3 5">
    <location>
        <position position="150"/>
    </location>
</feature>
<feature type="binding site" evidence="3">
    <location>
        <begin position="32"/>
        <end position="40"/>
    </location>
    <ligand>
        <name>ATP</name>
        <dbReference type="ChEBI" id="CHEBI:30616"/>
    </ligand>
</feature>
<feature type="binding site" evidence="3">
    <location>
        <position position="55"/>
    </location>
    <ligand>
        <name>ATP</name>
        <dbReference type="ChEBI" id="CHEBI:30616"/>
    </ligand>
</feature>
<feature type="binding site" evidence="4">
    <location>
        <position position="340"/>
    </location>
    <ligand>
        <name>Ca(2+)</name>
        <dbReference type="ChEBI" id="CHEBI:29108"/>
        <label>1</label>
    </ligand>
</feature>
<feature type="binding site" evidence="4">
    <location>
        <position position="342"/>
    </location>
    <ligand>
        <name>Ca(2+)</name>
        <dbReference type="ChEBI" id="CHEBI:29108"/>
        <label>1</label>
    </ligand>
</feature>
<feature type="binding site" evidence="4">
    <location>
        <position position="344"/>
    </location>
    <ligand>
        <name>Ca(2+)</name>
        <dbReference type="ChEBI" id="CHEBI:29108"/>
        <label>1</label>
    </ligand>
</feature>
<feature type="binding site" evidence="4">
    <location>
        <position position="346"/>
    </location>
    <ligand>
        <name>Ca(2+)</name>
        <dbReference type="ChEBI" id="CHEBI:29108"/>
        <label>1</label>
    </ligand>
</feature>
<feature type="binding site" evidence="4">
    <location>
        <position position="351"/>
    </location>
    <ligand>
        <name>Ca(2+)</name>
        <dbReference type="ChEBI" id="CHEBI:29108"/>
        <label>1</label>
    </ligand>
</feature>
<feature type="binding site" evidence="4">
    <location>
        <position position="376"/>
    </location>
    <ligand>
        <name>Ca(2+)</name>
        <dbReference type="ChEBI" id="CHEBI:29108"/>
        <label>2</label>
    </ligand>
</feature>
<feature type="binding site" evidence="4">
    <location>
        <position position="378"/>
    </location>
    <ligand>
        <name>Ca(2+)</name>
        <dbReference type="ChEBI" id="CHEBI:29108"/>
        <label>2</label>
    </ligand>
</feature>
<feature type="binding site" evidence="4">
    <location>
        <position position="380"/>
    </location>
    <ligand>
        <name>Ca(2+)</name>
        <dbReference type="ChEBI" id="CHEBI:29108"/>
        <label>2</label>
    </ligand>
</feature>
<feature type="binding site" evidence="4">
    <location>
        <position position="382"/>
    </location>
    <ligand>
        <name>Ca(2+)</name>
        <dbReference type="ChEBI" id="CHEBI:29108"/>
        <label>2</label>
    </ligand>
</feature>
<feature type="binding site" evidence="4">
    <location>
        <position position="387"/>
    </location>
    <ligand>
        <name>Ca(2+)</name>
        <dbReference type="ChEBI" id="CHEBI:29108"/>
        <label>2</label>
    </ligand>
</feature>
<feature type="binding site" evidence="4">
    <location>
        <position position="412"/>
    </location>
    <ligand>
        <name>Ca(2+)</name>
        <dbReference type="ChEBI" id="CHEBI:29108"/>
        <label>3</label>
    </ligand>
</feature>
<feature type="binding site" evidence="4">
    <location>
        <position position="414"/>
    </location>
    <ligand>
        <name>Ca(2+)</name>
        <dbReference type="ChEBI" id="CHEBI:29108"/>
        <label>3</label>
    </ligand>
</feature>
<feature type="binding site" evidence="4">
    <location>
        <position position="416"/>
    </location>
    <ligand>
        <name>Ca(2+)</name>
        <dbReference type="ChEBI" id="CHEBI:29108"/>
        <label>3</label>
    </ligand>
</feature>
<feature type="binding site" evidence="4">
    <location>
        <position position="418"/>
    </location>
    <ligand>
        <name>Ca(2+)</name>
        <dbReference type="ChEBI" id="CHEBI:29108"/>
        <label>3</label>
    </ligand>
</feature>
<feature type="binding site" evidence="4">
    <location>
        <position position="423"/>
    </location>
    <ligand>
        <name>Ca(2+)</name>
        <dbReference type="ChEBI" id="CHEBI:29108"/>
        <label>3</label>
    </ligand>
</feature>
<feature type="binding site" evidence="4">
    <location>
        <position position="446"/>
    </location>
    <ligand>
        <name>Ca(2+)</name>
        <dbReference type="ChEBI" id="CHEBI:29108"/>
        <label>4</label>
    </ligand>
</feature>
<feature type="binding site" evidence="4">
    <location>
        <position position="448"/>
    </location>
    <ligand>
        <name>Ca(2+)</name>
        <dbReference type="ChEBI" id="CHEBI:29108"/>
        <label>4</label>
    </ligand>
</feature>
<feature type="binding site" evidence="4">
    <location>
        <position position="450"/>
    </location>
    <ligand>
        <name>Ca(2+)</name>
        <dbReference type="ChEBI" id="CHEBI:29108"/>
        <label>4</label>
    </ligand>
</feature>
<feature type="binding site" evidence="4">
    <location>
        <position position="452"/>
    </location>
    <ligand>
        <name>Ca(2+)</name>
        <dbReference type="ChEBI" id="CHEBI:29108"/>
        <label>4</label>
    </ligand>
</feature>
<feature type="binding site" evidence="4">
    <location>
        <position position="457"/>
    </location>
    <ligand>
        <name>Ca(2+)</name>
        <dbReference type="ChEBI" id="CHEBI:29108"/>
        <label>4</label>
    </ligand>
</feature>
<feature type="modified residue" description="Phosphoserine" evidence="2">
    <location>
        <position position="190"/>
    </location>
</feature>
<feature type="mutagenesis site" description="Loss of activity." evidence="6">
    <original>D</original>
    <variation>A</variation>
    <location>
        <position position="150"/>
    </location>
</feature>
<feature type="mutagenesis site" description="Loss of activity." evidence="6">
    <original>D</original>
    <variation>A</variation>
    <location>
        <position position="171"/>
    </location>
</feature>
<feature type="mutagenesis site" description="Constitutive activity." evidence="6">
    <original>F</original>
    <variation>A</variation>
    <location>
        <position position="306"/>
    </location>
</feature>
<feature type="sequence conflict" description="In Ref. 1; BAA04830." evidence="9" ref="1">
    <original>N</original>
    <variation>I</variation>
    <location>
        <position position="403"/>
    </location>
</feature>
<feature type="sequence conflict" description="In Ref. 1; BAA04830." evidence="9" ref="1">
    <original>Y</original>
    <variation>D</variation>
    <location>
        <position position="410"/>
    </location>
</feature>
<name>CDPKB_ARATH</name>
<proteinExistence type="evidence at protein level"/>